<organism>
    <name type="scientific">Synechocystis sp. (strain ATCC 27184 / PCC 6803 / Kazusa)</name>
    <dbReference type="NCBI Taxonomy" id="1111708"/>
    <lineage>
        <taxon>Bacteria</taxon>
        <taxon>Bacillati</taxon>
        <taxon>Cyanobacteriota</taxon>
        <taxon>Cyanophyceae</taxon>
        <taxon>Synechococcales</taxon>
        <taxon>Merismopediaceae</taxon>
        <taxon>Synechocystis</taxon>
    </lineage>
</organism>
<accession>P74714</accession>
<dbReference type="EC" id="7.1.1.6" evidence="1"/>
<dbReference type="EMBL" id="BA000022">
    <property type="protein sequence ID" value="BAA18833.1"/>
    <property type="molecule type" value="Genomic_DNA"/>
</dbReference>
<dbReference type="PIR" id="S76921">
    <property type="entry name" value="S76921"/>
</dbReference>
<dbReference type="SMR" id="P74714"/>
<dbReference type="FunCoup" id="P74714">
    <property type="interactions" value="250"/>
</dbReference>
<dbReference type="IntAct" id="P74714">
    <property type="interactions" value="1"/>
</dbReference>
<dbReference type="STRING" id="1148.gene:10500605"/>
<dbReference type="TCDB" id="3.D.3.5.1">
    <property type="family name" value="the proton-translocating quinol:cytochrome c reductase (qcr) superfamily"/>
</dbReference>
<dbReference type="PaxDb" id="1148-1653923"/>
<dbReference type="EnsemblBacteria" id="BAA18833">
    <property type="protein sequence ID" value="BAA18833"/>
    <property type="gene ID" value="BAA18833"/>
</dbReference>
<dbReference type="KEGG" id="syn:slr1185"/>
<dbReference type="eggNOG" id="COG0723">
    <property type="taxonomic scope" value="Bacteria"/>
</dbReference>
<dbReference type="InParanoid" id="P74714"/>
<dbReference type="PhylomeDB" id="P74714"/>
<dbReference type="Proteomes" id="UP000001425">
    <property type="component" value="Chromosome"/>
</dbReference>
<dbReference type="GO" id="GO:0005886">
    <property type="term" value="C:plasma membrane"/>
    <property type="evidence" value="ECO:0000318"/>
    <property type="project" value="GO_Central"/>
</dbReference>
<dbReference type="GO" id="GO:0031676">
    <property type="term" value="C:plasma membrane-derived thylakoid membrane"/>
    <property type="evidence" value="ECO:0007669"/>
    <property type="project" value="UniProtKB-SubCell"/>
</dbReference>
<dbReference type="GO" id="GO:0051537">
    <property type="term" value="F:2 iron, 2 sulfur cluster binding"/>
    <property type="evidence" value="ECO:0007669"/>
    <property type="project" value="UniProtKB-KW"/>
</dbReference>
<dbReference type="GO" id="GO:0045158">
    <property type="term" value="F:electron transporter, transferring electrons within cytochrome b6/f complex of photosystem II activity"/>
    <property type="evidence" value="ECO:0007669"/>
    <property type="project" value="UniProtKB-UniRule"/>
</dbReference>
<dbReference type="GO" id="GO:0046872">
    <property type="term" value="F:metal ion binding"/>
    <property type="evidence" value="ECO:0007669"/>
    <property type="project" value="UniProtKB-KW"/>
</dbReference>
<dbReference type="GO" id="GO:0004497">
    <property type="term" value="F:monooxygenase activity"/>
    <property type="evidence" value="ECO:0007669"/>
    <property type="project" value="UniProtKB-ARBA"/>
</dbReference>
<dbReference type="GO" id="GO:0016491">
    <property type="term" value="F:oxidoreductase activity"/>
    <property type="evidence" value="ECO:0000318"/>
    <property type="project" value="GO_Central"/>
</dbReference>
<dbReference type="GO" id="GO:0016705">
    <property type="term" value="F:oxidoreductase activity, acting on paired donors, with incorporation or reduction of molecular oxygen"/>
    <property type="evidence" value="ECO:0007669"/>
    <property type="project" value="UniProtKB-ARBA"/>
</dbReference>
<dbReference type="GO" id="GO:0009496">
    <property type="term" value="F:plastoquinol--plastocyanin reductase activity"/>
    <property type="evidence" value="ECO:0007669"/>
    <property type="project" value="UniProtKB-UniRule"/>
</dbReference>
<dbReference type="GO" id="GO:0015979">
    <property type="term" value="P:photosynthesis"/>
    <property type="evidence" value="ECO:0007669"/>
    <property type="project" value="UniProtKB-UniRule"/>
</dbReference>
<dbReference type="Gene3D" id="2.102.10.10">
    <property type="entry name" value="Rieske [2Fe-2S] iron-sulphur domain"/>
    <property type="match status" value="1"/>
</dbReference>
<dbReference type="Gene3D" id="1.20.5.700">
    <property type="entry name" value="Single helix bin"/>
    <property type="match status" value="1"/>
</dbReference>
<dbReference type="HAMAP" id="MF_01335">
    <property type="entry name" value="Cytb6_f_Rieske"/>
    <property type="match status" value="1"/>
</dbReference>
<dbReference type="InterPro" id="IPR023960">
    <property type="entry name" value="Cyt_b6_f_Rieske"/>
</dbReference>
<dbReference type="InterPro" id="IPR017941">
    <property type="entry name" value="Rieske_2Fe-2S"/>
</dbReference>
<dbReference type="InterPro" id="IPR036922">
    <property type="entry name" value="Rieske_2Fe-2S_sf"/>
</dbReference>
<dbReference type="InterPro" id="IPR014349">
    <property type="entry name" value="Rieske_Fe-S_prot"/>
</dbReference>
<dbReference type="InterPro" id="IPR005805">
    <property type="entry name" value="Rieske_Fe-S_prot_C"/>
</dbReference>
<dbReference type="InterPro" id="IPR006311">
    <property type="entry name" value="TAT_signal"/>
</dbReference>
<dbReference type="NCBIfam" id="NF045928">
    <property type="entry name" value="Cytb6fFeSPetC"/>
    <property type="match status" value="1"/>
</dbReference>
<dbReference type="NCBIfam" id="NF010001">
    <property type="entry name" value="PRK13474.1"/>
    <property type="match status" value="1"/>
</dbReference>
<dbReference type="PANTHER" id="PTHR10134">
    <property type="entry name" value="CYTOCHROME B-C1 COMPLEX SUBUNIT RIESKE, MITOCHONDRIAL"/>
    <property type="match status" value="1"/>
</dbReference>
<dbReference type="Pfam" id="PF00355">
    <property type="entry name" value="Rieske"/>
    <property type="match status" value="1"/>
</dbReference>
<dbReference type="Pfam" id="PF25471">
    <property type="entry name" value="TM_PetC"/>
    <property type="match status" value="1"/>
</dbReference>
<dbReference type="PRINTS" id="PR00162">
    <property type="entry name" value="RIESKE"/>
</dbReference>
<dbReference type="SUPFAM" id="SSF50022">
    <property type="entry name" value="ISP domain"/>
    <property type="match status" value="1"/>
</dbReference>
<dbReference type="PROSITE" id="PS51296">
    <property type="entry name" value="RIESKE"/>
    <property type="match status" value="1"/>
</dbReference>
<dbReference type="PROSITE" id="PS51318">
    <property type="entry name" value="TAT"/>
    <property type="match status" value="1"/>
</dbReference>
<keyword id="KW-0001">2Fe-2S</keyword>
<keyword id="KW-1015">Disulfide bond</keyword>
<keyword id="KW-0249">Electron transport</keyword>
<keyword id="KW-0408">Iron</keyword>
<keyword id="KW-0411">Iron-sulfur</keyword>
<keyword id="KW-0472">Membrane</keyword>
<keyword id="KW-0479">Metal-binding</keyword>
<keyword id="KW-1185">Reference proteome</keyword>
<keyword id="KW-0793">Thylakoid</keyword>
<keyword id="KW-1278">Translocase</keyword>
<keyword id="KW-0812">Transmembrane</keyword>
<keyword id="KW-1133">Transmembrane helix</keyword>
<keyword id="KW-0813">Transport</keyword>
<name>UCRIA_SYNY3</name>
<evidence type="ECO:0000255" key="1">
    <source>
        <dbReference type="HAMAP-Rule" id="MF_01335"/>
    </source>
</evidence>
<comment type="function">
    <text evidence="1">Component of the cytochrome b6-f complex, which mediates electron transfer between photosystem II (PSII) and photosystem I (PSI), cyclic electron flow around PSI, and state transitions.</text>
</comment>
<comment type="catalytic activity">
    <reaction evidence="1">
        <text>2 oxidized [plastocyanin] + a plastoquinol + 2 H(+)(in) = 2 reduced [plastocyanin] + a plastoquinone + 4 H(+)(out)</text>
        <dbReference type="Rhea" id="RHEA:22148"/>
        <dbReference type="Rhea" id="RHEA-COMP:9561"/>
        <dbReference type="Rhea" id="RHEA-COMP:9562"/>
        <dbReference type="Rhea" id="RHEA-COMP:10039"/>
        <dbReference type="Rhea" id="RHEA-COMP:10040"/>
        <dbReference type="ChEBI" id="CHEBI:15378"/>
        <dbReference type="ChEBI" id="CHEBI:17757"/>
        <dbReference type="ChEBI" id="CHEBI:29036"/>
        <dbReference type="ChEBI" id="CHEBI:49552"/>
        <dbReference type="ChEBI" id="CHEBI:62192"/>
        <dbReference type="EC" id="7.1.1.6"/>
    </reaction>
</comment>
<comment type="cofactor">
    <cofactor evidence="1">
        <name>[2Fe-2S] cluster</name>
        <dbReference type="ChEBI" id="CHEBI:190135"/>
    </cofactor>
    <text evidence="1">Binds 1 [2Fe-2S] cluster per subunit.</text>
</comment>
<comment type="subunit">
    <text evidence="1">The 4 large subunits of the cytochrome b6-f complex are cytochrome b6, subunit IV (17 kDa polypeptide, PetD), cytochrome f and the Rieske protein, while the 4 small subunits are PetG, PetL, PetM and PetN. The complex functions as a dimer.</text>
</comment>
<comment type="subcellular location">
    <subcellularLocation>
        <location evidence="1">Cellular thylakoid membrane</location>
        <topology evidence="1">Single-pass membrane protein</topology>
    </subcellularLocation>
    <text evidence="1">The transmembrane helix obliquely spans the membrane in one monomer, and its extrinsic C-terminal domain is part of the other monomer.</text>
</comment>
<comment type="miscellaneous">
    <text>The Rieske iron-sulfur protein is a high potential 2Fe-2S protein.</text>
</comment>
<comment type="similarity">
    <text evidence="1">Belongs to the Rieske iron-sulfur protein family.</text>
</comment>
<gene>
    <name evidence="1" type="primary">petC1</name>
    <name type="ordered locus">slr1185</name>
</gene>
<reference key="1">
    <citation type="journal article" date="1996" name="DNA Res.">
        <title>Sequence analysis of the genome of the unicellular cyanobacterium Synechocystis sp. strain PCC6803. II. Sequence determination of the entire genome and assignment of potential protein-coding regions.</title>
        <authorList>
            <person name="Kaneko T."/>
            <person name="Sato S."/>
            <person name="Kotani H."/>
            <person name="Tanaka A."/>
            <person name="Asamizu E."/>
            <person name="Nakamura Y."/>
            <person name="Miyajima N."/>
            <person name="Hirosawa M."/>
            <person name="Sugiura M."/>
            <person name="Sasamoto S."/>
            <person name="Kimura T."/>
            <person name="Hosouchi T."/>
            <person name="Matsuno A."/>
            <person name="Muraki A."/>
            <person name="Nakazaki N."/>
            <person name="Naruo K."/>
            <person name="Okumura S."/>
            <person name="Shimpo S."/>
            <person name="Takeuchi C."/>
            <person name="Wada T."/>
            <person name="Watanabe A."/>
            <person name="Yamada M."/>
            <person name="Yasuda M."/>
            <person name="Tabata S."/>
        </authorList>
    </citation>
    <scope>NUCLEOTIDE SEQUENCE [LARGE SCALE GENOMIC DNA]</scope>
    <source>
        <strain>ATCC 27184 / PCC 6803 / Kazusa</strain>
    </source>
</reference>
<proteinExistence type="inferred from homology"/>
<protein>
    <recommendedName>
        <fullName evidence="1">Cytochrome b6-f complex iron-sulfur subunit 1</fullName>
        <ecNumber evidence="1">7.1.1.6</ecNumber>
    </recommendedName>
    <alternativeName>
        <fullName evidence="1">Plastohydroquinone:plastocyanin oxidoreductase iron-sulfur protein 1</fullName>
        <shortName evidence="1">ISP 1</shortName>
        <shortName evidence="1">RISP 1</shortName>
    </alternativeName>
    <alternativeName>
        <fullName evidence="1">Rieske iron-sulfur protein 1</fullName>
    </alternativeName>
</protein>
<sequence>MDNTQAIAPPSYSRRQLLNFLAGTTVAVTASAGAYAMGKFFVPPAEKGGAGGGIIAKDVLGNPIPASQILAEAPGTRALVAGLAGDPTYLIVKEDGSLDSIGIVDSCTHLGCTFPWNGNDQEFQCPCHGSRYHPDGSVARGPAPLPLKIVQVAVVDDQIFISPWTDLDPRTGEKPWWV</sequence>
<feature type="chain" id="PRO_0000127784" description="Cytochrome b6-f complex iron-sulfur subunit 1">
    <location>
        <begin position="1"/>
        <end position="178"/>
    </location>
</feature>
<feature type="transmembrane region" description="Helical" evidence="1">
    <location>
        <begin position="17"/>
        <end position="36"/>
    </location>
</feature>
<feature type="domain" description="Rieske" evidence="1">
    <location>
        <begin position="61"/>
        <end position="161"/>
    </location>
</feature>
<feature type="binding site" evidence="1">
    <location>
        <position position="107"/>
    </location>
    <ligand>
        <name>[2Fe-2S] cluster</name>
        <dbReference type="ChEBI" id="CHEBI:190135"/>
    </ligand>
</feature>
<feature type="binding site" evidence="1">
    <location>
        <position position="109"/>
    </location>
    <ligand>
        <name>[2Fe-2S] cluster</name>
        <dbReference type="ChEBI" id="CHEBI:190135"/>
    </ligand>
</feature>
<feature type="binding site" evidence="1">
    <location>
        <position position="125"/>
    </location>
    <ligand>
        <name>[2Fe-2S] cluster</name>
        <dbReference type="ChEBI" id="CHEBI:190135"/>
    </ligand>
</feature>
<feature type="binding site" evidence="1">
    <location>
        <position position="128"/>
    </location>
    <ligand>
        <name>[2Fe-2S] cluster</name>
        <dbReference type="ChEBI" id="CHEBI:190135"/>
    </ligand>
</feature>
<feature type="disulfide bond" evidence="1">
    <location>
        <begin position="112"/>
        <end position="127"/>
    </location>
</feature>